<sequence length="527" mass="59797">MADSRDPASDQMKLWKEQRAAQKPDVLTTGGGNPIGDKLNVMTAGPRGPLLVQDVVFTDEMAHFDRERIPERVVHAKGAGAFGYFEVTHDITKYSKAKVFEHIGKRTPIAVRFSTVAGESGSADTVRDPRGFAVKFYTEDGNWDLVGNNTPIFFIRDAILFPSFIHSQKRNPQTHLKDPDMVWDFWSLRPESLHQVSFLFSDRGIPDGHRHMNGYGSHTFKLVNAAGEAVYCKFHYKTDQGIKNLSVEDAARLSHEDPDYGLRDLFNAIATGNYPSWTFYIQVMTFSQAETFPFNPFDLTKIWPHQDYPLIPVGKLVLNRNPVNYFAEVEQMAFDPSNMPPGIEPSPDKMLQGRLFAYPDTHRHRLGPNYLQIPVNCPFRARVANYQRDGPMCMLDNQGGAPNYYPNSFSAPEQQRCVLEHSSQCSPDVQRFNSANEDNVTQVRTFYLKVLGEEERKRLCENIAGHLKDAQLFIQKKAVKNFSDVHPDYGARIQALLDKYNAEKPKNAIHTFMQHGSHLAAREKANL</sequence>
<reference key="1">
    <citation type="journal article" date="1998" name="DNA Seq.">
        <title>cDNA and deduced amino acid sequences of dog catalase.</title>
        <authorList>
            <person name="Nakamura K."/>
            <person name="Watanabe M."/>
            <person name="Ikeda T."/>
        </authorList>
    </citation>
    <scope>NUCLEOTIDE SEQUENCE [MRNA]</scope>
    <source>
        <strain>Beagle</strain>
        <tissue>Liver</tissue>
    </source>
</reference>
<reference key="2">
    <citation type="journal article" date="2000" name="Int. J. Biochem. Cell Biol.">
        <title>cDNA cloning of mutant catalase in acatalasemic beagle dog: single nucleotide substitution leading to thermal-instability and enhanced proteolysis of mutant enzyme.</title>
        <authorList>
            <person name="Nakamura K."/>
            <person name="Watanabe M."/>
            <person name="Takanaka K."/>
            <person name="Sasaki Y."/>
            <person name="Ikeda T."/>
        </authorList>
    </citation>
    <scope>NUCLEOTIDE SEQUENCE [MRNA]</scope>
    <scope>VARIANT ACATALASEMIA THR-327</scope>
    <source>
        <strain>Beagle</strain>
    </source>
</reference>
<protein>
    <recommendedName>
        <fullName>Catalase</fullName>
        <ecNumber evidence="3">1.11.1.6</ecNumber>
    </recommendedName>
</protein>
<name>CATA_CANLF</name>
<dbReference type="EC" id="1.11.1.6" evidence="3"/>
<dbReference type="EMBL" id="AB012918">
    <property type="protein sequence ID" value="BAA36420.1"/>
    <property type="molecule type" value="mRNA"/>
</dbReference>
<dbReference type="EMBL" id="AB038231">
    <property type="protein sequence ID" value="BAB20764.1"/>
    <property type="molecule type" value="mRNA"/>
</dbReference>
<dbReference type="RefSeq" id="NP_001002984.1">
    <property type="nucleotide sequence ID" value="NM_001002984.1"/>
</dbReference>
<dbReference type="SMR" id="O97492"/>
<dbReference type="FunCoup" id="O97492">
    <property type="interactions" value="622"/>
</dbReference>
<dbReference type="STRING" id="9615.ENSCAFP00000010324"/>
<dbReference type="PeroxiBase" id="5319">
    <property type="entry name" value="CfaKat01"/>
</dbReference>
<dbReference type="SwissPalm" id="O97492"/>
<dbReference type="PaxDb" id="9612-ENSCAFP00000010324"/>
<dbReference type="Ensembl" id="ENSCAFT00030042809.1">
    <property type="protein sequence ID" value="ENSCAFP00030037354.1"/>
    <property type="gene ID" value="ENSCAFG00030023279.1"/>
</dbReference>
<dbReference type="Ensembl" id="ENSCAFT00845042560.1">
    <property type="protein sequence ID" value="ENSCAFP00845033366.1"/>
    <property type="gene ID" value="ENSCAFG00845024098.1"/>
</dbReference>
<dbReference type="GeneID" id="403474"/>
<dbReference type="KEGG" id="cfa:403474"/>
<dbReference type="CTD" id="847"/>
<dbReference type="VEuPathDB" id="HostDB:ENSCAFG00845024098"/>
<dbReference type="VGNC" id="VGNC:111389">
    <property type="gene designation" value="CAT"/>
</dbReference>
<dbReference type="eggNOG" id="KOG0047">
    <property type="taxonomic scope" value="Eukaryota"/>
</dbReference>
<dbReference type="GeneTree" id="ENSGT00390000018100"/>
<dbReference type="HOGENOM" id="CLU_010645_2_0_1"/>
<dbReference type="InParanoid" id="O97492"/>
<dbReference type="OMA" id="KFRWNVF"/>
<dbReference type="OrthoDB" id="6880011at2759"/>
<dbReference type="TreeFam" id="TF300540"/>
<dbReference type="Reactome" id="R-CFA-3299685">
    <property type="pathway name" value="Detoxification of Reactive Oxygen Species"/>
</dbReference>
<dbReference type="Reactome" id="R-CFA-6798695">
    <property type="pathway name" value="Neutrophil degranulation"/>
</dbReference>
<dbReference type="Reactome" id="R-CFA-9033241">
    <property type="pathway name" value="Peroxisomal protein import"/>
</dbReference>
<dbReference type="Proteomes" id="UP000002254">
    <property type="component" value="Unplaced"/>
</dbReference>
<dbReference type="Proteomes" id="UP000694429">
    <property type="component" value="Chromosome 18"/>
</dbReference>
<dbReference type="Proteomes" id="UP000694542">
    <property type="component" value="Unplaced"/>
</dbReference>
<dbReference type="Proteomes" id="UP000805418">
    <property type="component" value="Chromosome 18"/>
</dbReference>
<dbReference type="GO" id="GO:0062151">
    <property type="term" value="C:catalase complex"/>
    <property type="evidence" value="ECO:0007669"/>
    <property type="project" value="Ensembl"/>
</dbReference>
<dbReference type="GO" id="GO:0005737">
    <property type="term" value="C:cytoplasm"/>
    <property type="evidence" value="ECO:0000318"/>
    <property type="project" value="GO_Central"/>
</dbReference>
<dbReference type="GO" id="GO:0005739">
    <property type="term" value="C:mitochondrion"/>
    <property type="evidence" value="ECO:0000318"/>
    <property type="project" value="GO_Central"/>
</dbReference>
<dbReference type="GO" id="GO:0005782">
    <property type="term" value="C:peroxisomal matrix"/>
    <property type="evidence" value="ECO:0007669"/>
    <property type="project" value="UniProtKB-SubCell"/>
</dbReference>
<dbReference type="GO" id="GO:0005778">
    <property type="term" value="C:peroxisomal membrane"/>
    <property type="evidence" value="ECO:0007669"/>
    <property type="project" value="Ensembl"/>
</dbReference>
<dbReference type="GO" id="GO:0005777">
    <property type="term" value="C:peroxisome"/>
    <property type="evidence" value="ECO:0000318"/>
    <property type="project" value="GO_Central"/>
</dbReference>
<dbReference type="GO" id="GO:0004046">
    <property type="term" value="F:aminoacylase activity"/>
    <property type="evidence" value="ECO:0007669"/>
    <property type="project" value="Ensembl"/>
</dbReference>
<dbReference type="GO" id="GO:0004096">
    <property type="term" value="F:catalase activity"/>
    <property type="evidence" value="ECO:0000318"/>
    <property type="project" value="GO_Central"/>
</dbReference>
<dbReference type="GO" id="GO:0019899">
    <property type="term" value="F:enzyme binding"/>
    <property type="evidence" value="ECO:0007669"/>
    <property type="project" value="Ensembl"/>
</dbReference>
<dbReference type="GO" id="GO:0020037">
    <property type="term" value="F:heme binding"/>
    <property type="evidence" value="ECO:0000318"/>
    <property type="project" value="GO_Central"/>
</dbReference>
<dbReference type="GO" id="GO:0046872">
    <property type="term" value="F:metal ion binding"/>
    <property type="evidence" value="ECO:0007669"/>
    <property type="project" value="UniProtKB-KW"/>
</dbReference>
<dbReference type="GO" id="GO:0050661">
    <property type="term" value="F:NADP binding"/>
    <property type="evidence" value="ECO:0007669"/>
    <property type="project" value="Ensembl"/>
</dbReference>
<dbReference type="GO" id="GO:0042803">
    <property type="term" value="F:protein homodimerization activity"/>
    <property type="evidence" value="ECO:0007669"/>
    <property type="project" value="Ensembl"/>
</dbReference>
<dbReference type="GO" id="GO:0009060">
    <property type="term" value="P:aerobic respiration"/>
    <property type="evidence" value="ECO:0007669"/>
    <property type="project" value="Ensembl"/>
</dbReference>
<dbReference type="GO" id="GO:0061692">
    <property type="term" value="P:cellular detoxification of hydrogen peroxide"/>
    <property type="evidence" value="ECO:0007669"/>
    <property type="project" value="Ensembl"/>
</dbReference>
<dbReference type="GO" id="GO:0008203">
    <property type="term" value="P:cholesterol metabolic process"/>
    <property type="evidence" value="ECO:0007669"/>
    <property type="project" value="Ensembl"/>
</dbReference>
<dbReference type="GO" id="GO:0020027">
    <property type="term" value="P:hemoglobin metabolic process"/>
    <property type="evidence" value="ECO:0007669"/>
    <property type="project" value="Ensembl"/>
</dbReference>
<dbReference type="GO" id="GO:0042744">
    <property type="term" value="P:hydrogen peroxide catabolic process"/>
    <property type="evidence" value="ECO:0000318"/>
    <property type="project" value="GO_Central"/>
</dbReference>
<dbReference type="GO" id="GO:0043066">
    <property type="term" value="P:negative regulation of apoptotic process"/>
    <property type="evidence" value="ECO:0007669"/>
    <property type="project" value="Ensembl"/>
</dbReference>
<dbReference type="GO" id="GO:0051781">
    <property type="term" value="P:positive regulation of cell division"/>
    <property type="evidence" value="ECO:0007669"/>
    <property type="project" value="UniProtKB-KW"/>
</dbReference>
<dbReference type="GO" id="GO:0051897">
    <property type="term" value="P:positive regulation of phosphatidylinositol 3-kinase/protein kinase B signal transduction"/>
    <property type="evidence" value="ECO:0007669"/>
    <property type="project" value="Ensembl"/>
</dbReference>
<dbReference type="GO" id="GO:0042542">
    <property type="term" value="P:response to hydrogen peroxide"/>
    <property type="evidence" value="ECO:0000318"/>
    <property type="project" value="GO_Central"/>
</dbReference>
<dbReference type="GO" id="GO:0006641">
    <property type="term" value="P:triglyceride metabolic process"/>
    <property type="evidence" value="ECO:0007669"/>
    <property type="project" value="Ensembl"/>
</dbReference>
<dbReference type="GO" id="GO:0009650">
    <property type="term" value="P:UV protection"/>
    <property type="evidence" value="ECO:0007669"/>
    <property type="project" value="Ensembl"/>
</dbReference>
<dbReference type="CDD" id="cd08156">
    <property type="entry name" value="catalase_clade_3"/>
    <property type="match status" value="1"/>
</dbReference>
<dbReference type="FunFam" id="2.40.180.10:FF:000001">
    <property type="entry name" value="Catalase"/>
    <property type="match status" value="1"/>
</dbReference>
<dbReference type="Gene3D" id="2.40.180.10">
    <property type="entry name" value="Catalase core domain"/>
    <property type="match status" value="1"/>
</dbReference>
<dbReference type="InterPro" id="IPR018028">
    <property type="entry name" value="Catalase"/>
</dbReference>
<dbReference type="InterPro" id="IPR040333">
    <property type="entry name" value="Catalase_3"/>
</dbReference>
<dbReference type="InterPro" id="IPR024708">
    <property type="entry name" value="Catalase_AS"/>
</dbReference>
<dbReference type="InterPro" id="IPR024711">
    <property type="entry name" value="Catalase_clade1/3"/>
</dbReference>
<dbReference type="InterPro" id="IPR011614">
    <property type="entry name" value="Catalase_core"/>
</dbReference>
<dbReference type="InterPro" id="IPR002226">
    <property type="entry name" value="Catalase_haem_BS"/>
</dbReference>
<dbReference type="InterPro" id="IPR010582">
    <property type="entry name" value="Catalase_immune_responsive"/>
</dbReference>
<dbReference type="InterPro" id="IPR020835">
    <property type="entry name" value="Catalase_sf"/>
</dbReference>
<dbReference type="PANTHER" id="PTHR11465">
    <property type="entry name" value="CATALASE"/>
    <property type="match status" value="1"/>
</dbReference>
<dbReference type="PANTHER" id="PTHR11465:SF9">
    <property type="entry name" value="CATALASE"/>
    <property type="match status" value="1"/>
</dbReference>
<dbReference type="Pfam" id="PF00199">
    <property type="entry name" value="Catalase"/>
    <property type="match status" value="1"/>
</dbReference>
<dbReference type="Pfam" id="PF06628">
    <property type="entry name" value="Catalase-rel"/>
    <property type="match status" value="1"/>
</dbReference>
<dbReference type="PIRSF" id="PIRSF038928">
    <property type="entry name" value="Catalase_clade1-3"/>
    <property type="match status" value="1"/>
</dbReference>
<dbReference type="PRINTS" id="PR00067">
    <property type="entry name" value="CATALASE"/>
</dbReference>
<dbReference type="SMART" id="SM01060">
    <property type="entry name" value="Catalase"/>
    <property type="match status" value="1"/>
</dbReference>
<dbReference type="SUPFAM" id="SSF56634">
    <property type="entry name" value="Heme-dependent catalase-like"/>
    <property type="match status" value="1"/>
</dbReference>
<dbReference type="PROSITE" id="PS00437">
    <property type="entry name" value="CATALASE_1"/>
    <property type="match status" value="1"/>
</dbReference>
<dbReference type="PROSITE" id="PS00438">
    <property type="entry name" value="CATALASE_2"/>
    <property type="match status" value="1"/>
</dbReference>
<dbReference type="PROSITE" id="PS51402">
    <property type="entry name" value="CATALASE_3"/>
    <property type="match status" value="1"/>
</dbReference>
<accession>O97492</accession>
<accession>Q9GKY3</accession>
<organism>
    <name type="scientific">Canis lupus familiaris</name>
    <name type="common">Dog</name>
    <name type="synonym">Canis familiaris</name>
    <dbReference type="NCBI Taxonomy" id="9615"/>
    <lineage>
        <taxon>Eukaryota</taxon>
        <taxon>Metazoa</taxon>
        <taxon>Chordata</taxon>
        <taxon>Craniata</taxon>
        <taxon>Vertebrata</taxon>
        <taxon>Euteleostomi</taxon>
        <taxon>Mammalia</taxon>
        <taxon>Eutheria</taxon>
        <taxon>Laurasiatheria</taxon>
        <taxon>Carnivora</taxon>
        <taxon>Caniformia</taxon>
        <taxon>Canidae</taxon>
        <taxon>Canis</taxon>
    </lineage>
</organism>
<comment type="function">
    <text evidence="1">Catalyzes the degradation of hydrogen peroxide (H(2)O(2)) generated by peroxisomal oxidases to water and oxygen, thereby protecting cells from the toxic effects of hydrogen peroxide. Promotes growth of cells including T-cells, B-cells, myeloid leukemia cells, melanoma cells, mastocytoma cells and normal and transformed fibroblast cells.</text>
</comment>
<comment type="catalytic activity">
    <reaction evidence="3">
        <text>2 H2O2 = O2 + 2 H2O</text>
        <dbReference type="Rhea" id="RHEA:20309"/>
        <dbReference type="ChEBI" id="CHEBI:15377"/>
        <dbReference type="ChEBI" id="CHEBI:15379"/>
        <dbReference type="ChEBI" id="CHEBI:16240"/>
        <dbReference type="EC" id="1.11.1.6"/>
    </reaction>
</comment>
<comment type="cofactor">
    <cofactor evidence="1">
        <name>heme</name>
        <dbReference type="ChEBI" id="CHEBI:30413"/>
    </cofactor>
</comment>
<comment type="cofactor">
    <cofactor evidence="1">
        <name>NADP(+)</name>
        <dbReference type="ChEBI" id="CHEBI:58349"/>
    </cofactor>
</comment>
<comment type="subunit">
    <text evidence="1">Homotetramer. Interacts (via microbody targeting signal) with PEX5, monomeric form interacts with PEX5, leading to its translocation into peroxisomes.</text>
</comment>
<comment type="subcellular location">
    <subcellularLocation>
        <location evidence="1">Peroxisome matrix</location>
    </subcellularLocation>
</comment>
<comment type="similarity">
    <text evidence="6">Belongs to the catalase family.</text>
</comment>
<feature type="initiator methionine" description="Removed" evidence="1">
    <location>
        <position position="1"/>
    </location>
</feature>
<feature type="chain" id="PRO_0000084899" description="Catalase">
    <location>
        <begin position="2"/>
        <end position="527"/>
    </location>
</feature>
<feature type="region of interest" description="Disordered" evidence="4">
    <location>
        <begin position="1"/>
        <end position="34"/>
    </location>
</feature>
<feature type="short sequence motif" description="Microbody targeting signal; atypical" evidence="1">
    <location>
        <begin position="524"/>
        <end position="527"/>
    </location>
</feature>
<feature type="compositionally biased region" description="Basic and acidic residues" evidence="4">
    <location>
        <begin position="1"/>
        <end position="22"/>
    </location>
</feature>
<feature type="active site" evidence="3">
    <location>
        <position position="75"/>
    </location>
</feature>
<feature type="active site" evidence="3">
    <location>
        <position position="148"/>
    </location>
</feature>
<feature type="binding site" evidence="1">
    <location>
        <position position="194"/>
    </location>
    <ligand>
        <name>NADP(+)</name>
        <dbReference type="ChEBI" id="CHEBI:58349"/>
    </ligand>
</feature>
<feature type="binding site" evidence="1">
    <location>
        <position position="201"/>
    </location>
    <ligand>
        <name>NADP(+)</name>
        <dbReference type="ChEBI" id="CHEBI:58349"/>
    </ligand>
</feature>
<feature type="binding site" evidence="1">
    <location>
        <position position="203"/>
    </location>
    <ligand>
        <name>NADP(+)</name>
        <dbReference type="ChEBI" id="CHEBI:58349"/>
    </ligand>
</feature>
<feature type="binding site" evidence="1">
    <location>
        <position position="213"/>
    </location>
    <ligand>
        <name>NADP(+)</name>
        <dbReference type="ChEBI" id="CHEBI:58349"/>
    </ligand>
</feature>
<feature type="binding site" evidence="1">
    <location>
        <position position="237"/>
    </location>
    <ligand>
        <name>NADP(+)</name>
        <dbReference type="ChEBI" id="CHEBI:58349"/>
    </ligand>
</feature>
<feature type="binding site" evidence="1">
    <location>
        <position position="303"/>
    </location>
    <ligand>
        <name>NADP(+)</name>
        <dbReference type="ChEBI" id="CHEBI:58349"/>
    </ligand>
</feature>
<feature type="binding site" evidence="1">
    <location>
        <position position="305"/>
    </location>
    <ligand>
        <name>NADP(+)</name>
        <dbReference type="ChEBI" id="CHEBI:58349"/>
    </ligand>
</feature>
<feature type="binding site" description="axial binding residue" evidence="1">
    <location>
        <position position="358"/>
    </location>
    <ligand>
        <name>heme</name>
        <dbReference type="ChEBI" id="CHEBI:30413"/>
    </ligand>
    <ligandPart>
        <name>Fe</name>
        <dbReference type="ChEBI" id="CHEBI:18248"/>
    </ligandPart>
</feature>
<feature type="modified residue" description="N-acetylalanine" evidence="1">
    <location>
        <position position="2"/>
    </location>
</feature>
<feature type="modified residue" description="Phosphoserine" evidence="1">
    <location>
        <position position="9"/>
    </location>
</feature>
<feature type="modified residue" description="N6-succinyllysine" evidence="2">
    <location>
        <position position="13"/>
    </location>
</feature>
<feature type="modified residue" description="N6-succinyllysine" evidence="2">
    <location>
        <position position="221"/>
    </location>
</feature>
<feature type="modified residue" description="N6-acetyllysine" evidence="2">
    <location>
        <position position="233"/>
    </location>
</feature>
<feature type="modified residue" description="Phosphoserine" evidence="1">
    <location>
        <position position="422"/>
    </location>
</feature>
<feature type="modified residue" description="Phosphoserine" evidence="2">
    <location>
        <position position="434"/>
    </location>
</feature>
<feature type="modified residue" description="N6-acetyllysine; alternate" evidence="2">
    <location>
        <position position="449"/>
    </location>
</feature>
<feature type="modified residue" description="N6-succinyllysine; alternate" evidence="2">
    <location>
        <position position="449"/>
    </location>
</feature>
<feature type="modified residue" description="N6-acetyllysine; alternate" evidence="2">
    <location>
        <position position="480"/>
    </location>
</feature>
<feature type="modified residue" description="N6-succinyllysine; alternate" evidence="2">
    <location>
        <position position="480"/>
    </location>
</feature>
<feature type="modified residue" description="N6-acetyllysine" evidence="2">
    <location>
        <position position="499"/>
    </location>
</feature>
<feature type="modified residue" description="Phosphothreonine" evidence="1">
    <location>
        <position position="511"/>
    </location>
</feature>
<feature type="modified residue" description="Phosphoserine" evidence="1">
    <location>
        <position position="517"/>
    </location>
</feature>
<feature type="sequence variant" description="In acatalasemia; heat-labile." evidence="5">
    <original>A</original>
    <variation>T</variation>
    <location>
        <position position="327"/>
    </location>
</feature>
<proteinExistence type="evidence at protein level"/>
<keyword id="KW-0007">Acetylation</keyword>
<keyword id="KW-0225">Disease variant</keyword>
<keyword id="KW-0349">Heme</keyword>
<keyword id="KW-0376">Hydrogen peroxide</keyword>
<keyword id="KW-0408">Iron</keyword>
<keyword id="KW-0479">Metal-binding</keyword>
<keyword id="KW-0497">Mitogen</keyword>
<keyword id="KW-0521">NADP</keyword>
<keyword id="KW-0560">Oxidoreductase</keyword>
<keyword id="KW-0575">Peroxidase</keyword>
<keyword id="KW-0576">Peroxisome</keyword>
<keyword id="KW-0597">Phosphoprotein</keyword>
<keyword id="KW-1185">Reference proteome</keyword>
<gene>
    <name type="primary">CAT</name>
</gene>
<evidence type="ECO:0000250" key="1">
    <source>
        <dbReference type="UniProtKB" id="P04040"/>
    </source>
</evidence>
<evidence type="ECO:0000250" key="2">
    <source>
        <dbReference type="UniProtKB" id="P24270"/>
    </source>
</evidence>
<evidence type="ECO:0000255" key="3">
    <source>
        <dbReference type="PROSITE-ProRule" id="PRU10013"/>
    </source>
</evidence>
<evidence type="ECO:0000256" key="4">
    <source>
        <dbReference type="SAM" id="MobiDB-lite"/>
    </source>
</evidence>
<evidence type="ECO:0000269" key="5">
    <source>
    </source>
</evidence>
<evidence type="ECO:0000305" key="6"/>